<organism>
    <name type="scientific">Salmonella typhi</name>
    <dbReference type="NCBI Taxonomy" id="90370"/>
    <lineage>
        <taxon>Bacteria</taxon>
        <taxon>Pseudomonadati</taxon>
        <taxon>Pseudomonadota</taxon>
        <taxon>Gammaproteobacteria</taxon>
        <taxon>Enterobacterales</taxon>
        <taxon>Enterobacteriaceae</taxon>
        <taxon>Salmonella</taxon>
    </lineage>
</organism>
<accession>Q8Z0U8</accession>
<sequence>MTLSPYLQEVAKRRTFAIISHPDAGKTTITEKVLLFGQAIQTAGTVKGRGSSQHAKSDWMEMEKQRGISITTSVMQFPYHDCLVNLLDTPGHEDFSEDTYRTLTAVDCCLMVIDAAKGVEDRTRKLMEVTRLRDTPILTFMNKLDRDIRDPMELLDEVENELKIGCAPITWPIGCGKLFKGVYHLYKDETYLYQTGKGHTIQEVRIVKGLNNPDLDAAVGEDLAQQLRDELELVQGASNEFDEELFLAGEITPVFFGTALGNFGVDHMLDGLVAWAPAPMPRQTDTRTVEASEERFTGFVFKIQANMDPKHRDRVAFMRVVSGKYEKGMKLRQVRTGKDVVISDALTFMAGDRSHVEEAYPGDILGLHNHGTIQIGDTFTQGEMMKFTGIPNFAPELFRRIRLKDPLKQKQLLKGLVQLSEEGAVQVFRPISNNDLIVGAVGVLQFDVVVARLKSEYNVEAIYESVNVATARWVESADAKKFEEFKRKNETQLALDGGDNLTYIAPTMVNLNLTQERYPDVQFRKTREH</sequence>
<feature type="initiator methionine" description="Removed" evidence="1">
    <location>
        <position position="1"/>
    </location>
</feature>
<feature type="chain" id="PRO_0000210959" description="Peptide chain release factor 3">
    <location>
        <begin position="2"/>
        <end position="529"/>
    </location>
</feature>
<feature type="domain" description="tr-type G">
    <location>
        <begin position="11"/>
        <end position="280"/>
    </location>
</feature>
<feature type="binding site" evidence="1">
    <location>
        <begin position="20"/>
        <end position="27"/>
    </location>
    <ligand>
        <name>GTP</name>
        <dbReference type="ChEBI" id="CHEBI:37565"/>
    </ligand>
</feature>
<feature type="binding site" evidence="1">
    <location>
        <begin position="88"/>
        <end position="92"/>
    </location>
    <ligand>
        <name>GTP</name>
        <dbReference type="ChEBI" id="CHEBI:37565"/>
    </ligand>
</feature>
<feature type="binding site" evidence="1">
    <location>
        <begin position="142"/>
        <end position="145"/>
    </location>
    <ligand>
        <name>GTP</name>
        <dbReference type="ChEBI" id="CHEBI:37565"/>
    </ligand>
</feature>
<reference key="1">
    <citation type="journal article" date="2001" name="Nature">
        <title>Complete genome sequence of a multiple drug resistant Salmonella enterica serovar Typhi CT18.</title>
        <authorList>
            <person name="Parkhill J."/>
            <person name="Dougan G."/>
            <person name="James K.D."/>
            <person name="Thomson N.R."/>
            <person name="Pickard D."/>
            <person name="Wain J."/>
            <person name="Churcher C.M."/>
            <person name="Mungall K.L."/>
            <person name="Bentley S.D."/>
            <person name="Holden M.T.G."/>
            <person name="Sebaihia M."/>
            <person name="Baker S."/>
            <person name="Basham D."/>
            <person name="Brooks K."/>
            <person name="Chillingworth T."/>
            <person name="Connerton P."/>
            <person name="Cronin A."/>
            <person name="Davis P."/>
            <person name="Davies R.M."/>
            <person name="Dowd L."/>
            <person name="White N."/>
            <person name="Farrar J."/>
            <person name="Feltwell T."/>
            <person name="Hamlin N."/>
            <person name="Haque A."/>
            <person name="Hien T.T."/>
            <person name="Holroyd S."/>
            <person name="Jagels K."/>
            <person name="Krogh A."/>
            <person name="Larsen T.S."/>
            <person name="Leather S."/>
            <person name="Moule S."/>
            <person name="O'Gaora P."/>
            <person name="Parry C."/>
            <person name="Quail M.A."/>
            <person name="Rutherford K.M."/>
            <person name="Simmonds M."/>
            <person name="Skelton J."/>
            <person name="Stevens K."/>
            <person name="Whitehead S."/>
            <person name="Barrell B.G."/>
        </authorList>
    </citation>
    <scope>NUCLEOTIDE SEQUENCE [LARGE SCALE GENOMIC DNA]</scope>
    <source>
        <strain>CT18</strain>
    </source>
</reference>
<reference key="2">
    <citation type="journal article" date="2003" name="J. Bacteriol.">
        <title>Comparative genomics of Salmonella enterica serovar Typhi strains Ty2 and CT18.</title>
        <authorList>
            <person name="Deng W."/>
            <person name="Liou S.-R."/>
            <person name="Plunkett G. III"/>
            <person name="Mayhew G.F."/>
            <person name="Rose D.J."/>
            <person name="Burland V."/>
            <person name="Kodoyianni V."/>
            <person name="Schwartz D.C."/>
            <person name="Blattner F.R."/>
        </authorList>
    </citation>
    <scope>NUCLEOTIDE SEQUENCE [LARGE SCALE GENOMIC DNA]</scope>
    <source>
        <strain>ATCC 700931 / Ty2</strain>
    </source>
</reference>
<keyword id="KW-0963">Cytoplasm</keyword>
<keyword id="KW-0342">GTP-binding</keyword>
<keyword id="KW-0547">Nucleotide-binding</keyword>
<keyword id="KW-0648">Protein biosynthesis</keyword>
<evidence type="ECO:0000250" key="1"/>
<evidence type="ECO:0000305" key="2"/>
<protein>
    <recommendedName>
        <fullName>Peptide chain release factor 3</fullName>
        <shortName>RF-3</shortName>
    </recommendedName>
</protein>
<name>RF3_SALTI</name>
<comment type="function">
    <text evidence="1">Increases the formation of ribosomal termination complexes and stimulates activities of RF-1 and RF-2. It binds guanine nucleotides and has strong preference for UGA stop codons. It may interact directly with the ribosome. The stimulation of RF-1 and RF-2 is significantly reduced by GTP and GDP, but not by GMP (By similarity).</text>
</comment>
<comment type="subcellular location">
    <subcellularLocation>
        <location evidence="1">Cytoplasm</location>
    </subcellularLocation>
</comment>
<comment type="similarity">
    <text evidence="2">Belongs to the TRAFAC class translation factor GTPase superfamily. Classic translation factor GTPase family. PrfC subfamily.</text>
</comment>
<gene>
    <name type="primary">prfC</name>
    <name type="ordered locus">STY4910</name>
    <name type="ordered locus">t4603</name>
</gene>
<dbReference type="EMBL" id="AL513382">
    <property type="protein sequence ID" value="CAD03395.1"/>
    <property type="molecule type" value="Genomic_DNA"/>
</dbReference>
<dbReference type="EMBL" id="AE014613">
    <property type="protein sequence ID" value="AAO72035.1"/>
    <property type="molecule type" value="Genomic_DNA"/>
</dbReference>
<dbReference type="RefSeq" id="NP_458972.1">
    <property type="nucleotide sequence ID" value="NC_003198.1"/>
</dbReference>
<dbReference type="RefSeq" id="WP_000175968.1">
    <property type="nucleotide sequence ID" value="NZ_WSUR01000014.1"/>
</dbReference>
<dbReference type="SMR" id="Q8Z0U8"/>
<dbReference type="STRING" id="220341.gene:17588729"/>
<dbReference type="KEGG" id="stt:t4603"/>
<dbReference type="KEGG" id="sty:STY4910"/>
<dbReference type="PATRIC" id="fig|220341.7.peg.5031"/>
<dbReference type="eggNOG" id="COG4108">
    <property type="taxonomic scope" value="Bacteria"/>
</dbReference>
<dbReference type="HOGENOM" id="CLU_002794_2_1_6"/>
<dbReference type="OMA" id="GFVFKIH"/>
<dbReference type="OrthoDB" id="9801472at2"/>
<dbReference type="Proteomes" id="UP000000541">
    <property type="component" value="Chromosome"/>
</dbReference>
<dbReference type="Proteomes" id="UP000002670">
    <property type="component" value="Chromosome"/>
</dbReference>
<dbReference type="GO" id="GO:0005829">
    <property type="term" value="C:cytosol"/>
    <property type="evidence" value="ECO:0007669"/>
    <property type="project" value="TreeGrafter"/>
</dbReference>
<dbReference type="GO" id="GO:0005525">
    <property type="term" value="F:GTP binding"/>
    <property type="evidence" value="ECO:0007669"/>
    <property type="project" value="UniProtKB-UniRule"/>
</dbReference>
<dbReference type="GO" id="GO:0003924">
    <property type="term" value="F:GTPase activity"/>
    <property type="evidence" value="ECO:0007669"/>
    <property type="project" value="InterPro"/>
</dbReference>
<dbReference type="GO" id="GO:0097216">
    <property type="term" value="F:guanosine tetraphosphate binding"/>
    <property type="evidence" value="ECO:0007669"/>
    <property type="project" value="UniProtKB-ARBA"/>
</dbReference>
<dbReference type="GO" id="GO:0016150">
    <property type="term" value="F:translation release factor activity, codon nonspecific"/>
    <property type="evidence" value="ECO:0007669"/>
    <property type="project" value="TreeGrafter"/>
</dbReference>
<dbReference type="GO" id="GO:0016149">
    <property type="term" value="F:translation release factor activity, codon specific"/>
    <property type="evidence" value="ECO:0007669"/>
    <property type="project" value="UniProtKB-UniRule"/>
</dbReference>
<dbReference type="GO" id="GO:0006449">
    <property type="term" value="P:regulation of translational termination"/>
    <property type="evidence" value="ECO:0007669"/>
    <property type="project" value="UniProtKB-UniRule"/>
</dbReference>
<dbReference type="CDD" id="cd04169">
    <property type="entry name" value="RF3"/>
    <property type="match status" value="1"/>
</dbReference>
<dbReference type="CDD" id="cd03689">
    <property type="entry name" value="RF3_II"/>
    <property type="match status" value="1"/>
</dbReference>
<dbReference type="CDD" id="cd16259">
    <property type="entry name" value="RF3_III"/>
    <property type="match status" value="1"/>
</dbReference>
<dbReference type="FunFam" id="2.40.30.10:FF:000040">
    <property type="entry name" value="Peptide chain release factor 3"/>
    <property type="match status" value="1"/>
</dbReference>
<dbReference type="FunFam" id="3.30.70.3280:FF:000001">
    <property type="entry name" value="Peptide chain release factor 3"/>
    <property type="match status" value="1"/>
</dbReference>
<dbReference type="FunFam" id="3.40.50.300:FF:000184">
    <property type="entry name" value="Peptide chain release factor 3"/>
    <property type="match status" value="1"/>
</dbReference>
<dbReference type="FunFam" id="3.40.50.300:FF:000253">
    <property type="entry name" value="Peptide chain release factor 3"/>
    <property type="match status" value="1"/>
</dbReference>
<dbReference type="Gene3D" id="3.40.50.300">
    <property type="entry name" value="P-loop containing nucleotide triphosphate hydrolases"/>
    <property type="match status" value="3"/>
</dbReference>
<dbReference type="Gene3D" id="3.30.70.3280">
    <property type="entry name" value="Peptide chain release factor 3, domain III"/>
    <property type="match status" value="1"/>
</dbReference>
<dbReference type="HAMAP" id="MF_00072">
    <property type="entry name" value="Rel_fac_3"/>
    <property type="match status" value="1"/>
</dbReference>
<dbReference type="InterPro" id="IPR053905">
    <property type="entry name" value="EF-G-like_DII"/>
</dbReference>
<dbReference type="InterPro" id="IPR035647">
    <property type="entry name" value="EFG_III/V"/>
</dbReference>
<dbReference type="InterPro" id="IPR031157">
    <property type="entry name" value="G_TR_CS"/>
</dbReference>
<dbReference type="InterPro" id="IPR027417">
    <property type="entry name" value="P-loop_NTPase"/>
</dbReference>
<dbReference type="InterPro" id="IPR004548">
    <property type="entry name" value="PrfC"/>
</dbReference>
<dbReference type="InterPro" id="IPR032090">
    <property type="entry name" value="RF3_C"/>
</dbReference>
<dbReference type="InterPro" id="IPR038467">
    <property type="entry name" value="RF3_dom_3_sf"/>
</dbReference>
<dbReference type="InterPro" id="IPR041732">
    <property type="entry name" value="RF3_GTP-bd"/>
</dbReference>
<dbReference type="InterPro" id="IPR005225">
    <property type="entry name" value="Small_GTP-bd"/>
</dbReference>
<dbReference type="InterPro" id="IPR000795">
    <property type="entry name" value="T_Tr_GTP-bd_dom"/>
</dbReference>
<dbReference type="InterPro" id="IPR009000">
    <property type="entry name" value="Transl_B-barrel_sf"/>
</dbReference>
<dbReference type="NCBIfam" id="TIGR00503">
    <property type="entry name" value="prfC"/>
    <property type="match status" value="1"/>
</dbReference>
<dbReference type="NCBIfam" id="NF001964">
    <property type="entry name" value="PRK00741.1"/>
    <property type="match status" value="1"/>
</dbReference>
<dbReference type="NCBIfam" id="TIGR00231">
    <property type="entry name" value="small_GTP"/>
    <property type="match status" value="1"/>
</dbReference>
<dbReference type="PANTHER" id="PTHR43556">
    <property type="entry name" value="PEPTIDE CHAIN RELEASE FACTOR RF3"/>
    <property type="match status" value="1"/>
</dbReference>
<dbReference type="PANTHER" id="PTHR43556:SF2">
    <property type="entry name" value="PEPTIDE CHAIN RELEASE FACTOR RF3"/>
    <property type="match status" value="1"/>
</dbReference>
<dbReference type="Pfam" id="PF22042">
    <property type="entry name" value="EF-G_D2"/>
    <property type="match status" value="1"/>
</dbReference>
<dbReference type="Pfam" id="PF00009">
    <property type="entry name" value="GTP_EFTU"/>
    <property type="match status" value="1"/>
</dbReference>
<dbReference type="Pfam" id="PF16658">
    <property type="entry name" value="RF3_C"/>
    <property type="match status" value="1"/>
</dbReference>
<dbReference type="PRINTS" id="PR00315">
    <property type="entry name" value="ELONGATNFCT"/>
</dbReference>
<dbReference type="SUPFAM" id="SSF54980">
    <property type="entry name" value="EF-G C-terminal domain-like"/>
    <property type="match status" value="1"/>
</dbReference>
<dbReference type="SUPFAM" id="SSF52540">
    <property type="entry name" value="P-loop containing nucleoside triphosphate hydrolases"/>
    <property type="match status" value="1"/>
</dbReference>
<dbReference type="SUPFAM" id="SSF50447">
    <property type="entry name" value="Translation proteins"/>
    <property type="match status" value="1"/>
</dbReference>
<dbReference type="PROSITE" id="PS00301">
    <property type="entry name" value="G_TR_1"/>
    <property type="match status" value="1"/>
</dbReference>
<dbReference type="PROSITE" id="PS51722">
    <property type="entry name" value="G_TR_2"/>
    <property type="match status" value="1"/>
</dbReference>
<proteinExistence type="inferred from homology"/>